<accession>Q82XS4</accession>
<protein>
    <recommendedName>
        <fullName evidence="1">2,3-bisphosphoglycerate-dependent phosphoglycerate mutase 1</fullName>
        <shortName evidence="1">BPG-dependent PGAM 1</shortName>
        <shortName evidence="1">PGAM 1</shortName>
        <shortName evidence="1">Phosphoglyceromutase 1</shortName>
        <shortName evidence="1">dPGM 1</shortName>
        <ecNumber evidence="1">5.4.2.11</ecNumber>
    </recommendedName>
</protein>
<reference key="1">
    <citation type="journal article" date="2003" name="J. Bacteriol.">
        <title>Complete genome sequence of the ammonia-oxidizing bacterium and obligate chemolithoautotroph Nitrosomonas europaea.</title>
        <authorList>
            <person name="Chain P."/>
            <person name="Lamerdin J.E."/>
            <person name="Larimer F.W."/>
            <person name="Regala W."/>
            <person name="Lao V."/>
            <person name="Land M.L."/>
            <person name="Hauser L."/>
            <person name="Hooper A.B."/>
            <person name="Klotz M.G."/>
            <person name="Norton J."/>
            <person name="Sayavedra-Soto L.A."/>
            <person name="Arciero D.M."/>
            <person name="Hommes N.G."/>
            <person name="Whittaker M.M."/>
            <person name="Arp D.J."/>
        </authorList>
    </citation>
    <scope>NUCLEOTIDE SEQUENCE [LARGE SCALE GENOMIC DNA]</scope>
    <source>
        <strain>ATCC 19718 / CIP 103999 / KCTC 2705 / NBRC 14298</strain>
    </source>
</reference>
<proteinExistence type="inferred from homology"/>
<keyword id="KW-0312">Gluconeogenesis</keyword>
<keyword id="KW-0324">Glycolysis</keyword>
<keyword id="KW-0413">Isomerase</keyword>
<keyword id="KW-1185">Reference proteome</keyword>
<dbReference type="EC" id="5.4.2.11" evidence="1"/>
<dbReference type="EMBL" id="AL954747">
    <property type="protein sequence ID" value="CAD84089.1"/>
    <property type="molecule type" value="Genomic_DNA"/>
</dbReference>
<dbReference type="SMR" id="Q82XS4"/>
<dbReference type="STRING" id="228410.NE0178"/>
<dbReference type="KEGG" id="neu:NE0178"/>
<dbReference type="eggNOG" id="COG0588">
    <property type="taxonomic scope" value="Bacteria"/>
</dbReference>
<dbReference type="HOGENOM" id="CLU_033323_1_1_4"/>
<dbReference type="OrthoDB" id="9781415at2"/>
<dbReference type="PhylomeDB" id="Q82XS4"/>
<dbReference type="UniPathway" id="UPA00109">
    <property type="reaction ID" value="UER00186"/>
</dbReference>
<dbReference type="Proteomes" id="UP000001416">
    <property type="component" value="Chromosome"/>
</dbReference>
<dbReference type="GO" id="GO:0004619">
    <property type="term" value="F:phosphoglycerate mutase activity"/>
    <property type="evidence" value="ECO:0007669"/>
    <property type="project" value="UniProtKB-EC"/>
</dbReference>
<dbReference type="GO" id="GO:0006094">
    <property type="term" value="P:gluconeogenesis"/>
    <property type="evidence" value="ECO:0007669"/>
    <property type="project" value="UniProtKB-UniRule"/>
</dbReference>
<dbReference type="GO" id="GO:0006096">
    <property type="term" value="P:glycolytic process"/>
    <property type="evidence" value="ECO:0007669"/>
    <property type="project" value="UniProtKB-UniRule"/>
</dbReference>
<dbReference type="CDD" id="cd07067">
    <property type="entry name" value="HP_PGM_like"/>
    <property type="match status" value="1"/>
</dbReference>
<dbReference type="Gene3D" id="3.40.50.1240">
    <property type="entry name" value="Phosphoglycerate mutase-like"/>
    <property type="match status" value="1"/>
</dbReference>
<dbReference type="HAMAP" id="MF_01039">
    <property type="entry name" value="PGAM_GpmA"/>
    <property type="match status" value="1"/>
</dbReference>
<dbReference type="InterPro" id="IPR013078">
    <property type="entry name" value="His_Pase_superF_clade-1"/>
</dbReference>
<dbReference type="InterPro" id="IPR029033">
    <property type="entry name" value="His_PPase_superfam"/>
</dbReference>
<dbReference type="InterPro" id="IPR001345">
    <property type="entry name" value="PG/BPGM_mutase_AS"/>
</dbReference>
<dbReference type="InterPro" id="IPR005952">
    <property type="entry name" value="Phosphogly_mut1"/>
</dbReference>
<dbReference type="NCBIfam" id="TIGR01258">
    <property type="entry name" value="pgm_1"/>
    <property type="match status" value="1"/>
</dbReference>
<dbReference type="PANTHER" id="PTHR11931">
    <property type="entry name" value="PHOSPHOGLYCERATE MUTASE"/>
    <property type="match status" value="1"/>
</dbReference>
<dbReference type="Pfam" id="PF00300">
    <property type="entry name" value="His_Phos_1"/>
    <property type="match status" value="2"/>
</dbReference>
<dbReference type="PIRSF" id="PIRSF000709">
    <property type="entry name" value="6PFK_2-Ptase"/>
    <property type="match status" value="1"/>
</dbReference>
<dbReference type="SMART" id="SM00855">
    <property type="entry name" value="PGAM"/>
    <property type="match status" value="1"/>
</dbReference>
<dbReference type="SUPFAM" id="SSF53254">
    <property type="entry name" value="Phosphoglycerate mutase-like"/>
    <property type="match status" value="1"/>
</dbReference>
<dbReference type="PROSITE" id="PS00175">
    <property type="entry name" value="PG_MUTASE"/>
    <property type="match status" value="1"/>
</dbReference>
<sequence length="234" mass="26889">MNEIQEPIRLVLLRHGQSIWNQDRHFTGWGDIVLSPQGEQEALRAGHLLKQAGFTFDACFCSELQRASDTLAIVQSVMGLNHLSTYRTWRLNERHYGALEGMRPWAAIRKFGIWSTMKSQIRFDAAPPLLMPDDPRAPVNQPRYAAVDRTQLPLAESMQQTLERVRPLWQETILPEIRQGKRLLIVSHQNLLKTLVMQLEGLTGAQIMRLSITTGHPLCYELDHSLVPVKRYYL</sequence>
<name>GPMA1_NITEU</name>
<comment type="function">
    <text evidence="1">Catalyzes the interconversion of 2-phosphoglycerate and 3-phosphoglycerate.</text>
</comment>
<comment type="catalytic activity">
    <reaction evidence="1">
        <text>(2R)-2-phosphoglycerate = (2R)-3-phosphoglycerate</text>
        <dbReference type="Rhea" id="RHEA:15901"/>
        <dbReference type="ChEBI" id="CHEBI:58272"/>
        <dbReference type="ChEBI" id="CHEBI:58289"/>
        <dbReference type="EC" id="5.4.2.11"/>
    </reaction>
</comment>
<comment type="pathway">
    <text evidence="1">Carbohydrate degradation; glycolysis; pyruvate from D-glyceraldehyde 3-phosphate: step 3/5.</text>
</comment>
<comment type="subunit">
    <text evidence="1">Homodimer.</text>
</comment>
<comment type="similarity">
    <text evidence="1">Belongs to the phosphoglycerate mutase family. BPG-dependent PGAM subfamily.</text>
</comment>
<organism>
    <name type="scientific">Nitrosomonas europaea (strain ATCC 19718 / CIP 103999 / KCTC 2705 / NBRC 14298)</name>
    <dbReference type="NCBI Taxonomy" id="228410"/>
    <lineage>
        <taxon>Bacteria</taxon>
        <taxon>Pseudomonadati</taxon>
        <taxon>Pseudomonadota</taxon>
        <taxon>Betaproteobacteria</taxon>
        <taxon>Nitrosomonadales</taxon>
        <taxon>Nitrosomonadaceae</taxon>
        <taxon>Nitrosomonas</taxon>
    </lineage>
</organism>
<feature type="chain" id="PRO_0000179897" description="2,3-bisphosphoglycerate-dependent phosphoglycerate mutase 1">
    <location>
        <begin position="1"/>
        <end position="234"/>
    </location>
</feature>
<feature type="active site" description="Tele-phosphohistidine intermediate" evidence="1">
    <location>
        <position position="15"/>
    </location>
</feature>
<feature type="active site" description="Proton donor/acceptor" evidence="1">
    <location>
        <position position="93"/>
    </location>
</feature>
<feature type="binding site" evidence="1">
    <location>
        <begin position="14"/>
        <end position="21"/>
    </location>
    <ligand>
        <name>substrate</name>
    </ligand>
</feature>
<feature type="binding site" evidence="1">
    <location>
        <begin position="27"/>
        <end position="28"/>
    </location>
    <ligand>
        <name>substrate</name>
    </ligand>
</feature>
<feature type="binding site" evidence="1">
    <location>
        <position position="66"/>
    </location>
    <ligand>
        <name>substrate</name>
    </ligand>
</feature>
<feature type="binding site" evidence="1">
    <location>
        <begin position="93"/>
        <end position="96"/>
    </location>
    <ligand>
        <name>substrate</name>
    </ligand>
</feature>
<feature type="site" description="Transition state stabilizer" evidence="1">
    <location>
        <position position="188"/>
    </location>
</feature>
<gene>
    <name evidence="1" type="primary">gpmA1</name>
    <name type="ordered locus">NE0178</name>
</gene>
<evidence type="ECO:0000255" key="1">
    <source>
        <dbReference type="HAMAP-Rule" id="MF_01039"/>
    </source>
</evidence>